<reference key="1">
    <citation type="submission" date="2007-06" db="EMBL/GenBank/DDBJ databases">
        <title>Complete sequence of Methanococcus vannielii SB.</title>
        <authorList>
            <consortium name="US DOE Joint Genome Institute"/>
            <person name="Copeland A."/>
            <person name="Lucas S."/>
            <person name="Lapidus A."/>
            <person name="Barry K."/>
            <person name="Glavina del Rio T."/>
            <person name="Dalin E."/>
            <person name="Tice H."/>
            <person name="Pitluck S."/>
            <person name="Chain P."/>
            <person name="Malfatti S."/>
            <person name="Shin M."/>
            <person name="Vergez L."/>
            <person name="Schmutz J."/>
            <person name="Larimer F."/>
            <person name="Land M."/>
            <person name="Hauser L."/>
            <person name="Kyrpides N."/>
            <person name="Anderson I."/>
            <person name="Sieprawska-Lupa M."/>
            <person name="Whitman W.B."/>
            <person name="Richardson P."/>
        </authorList>
    </citation>
    <scope>NUCLEOTIDE SEQUENCE [LARGE SCALE GENOMIC DNA]</scope>
    <source>
        <strain>ATCC 35089 / DSM 1224 / JCM 13029 / OCM 148 / SB</strain>
    </source>
</reference>
<sequence>MGRIRQTFIKRTGEELIEKFAGKFTSDFEANKKAVEEVARISTKTLRNRIAGYITAKVKKMNA</sequence>
<keyword id="KW-0687">Ribonucleoprotein</keyword>
<keyword id="KW-0689">Ribosomal protein</keyword>
<proteinExistence type="inferred from homology"/>
<accession>A6US72</accession>
<evidence type="ECO:0000255" key="1">
    <source>
        <dbReference type="HAMAP-Rule" id="MF_00511"/>
    </source>
</evidence>
<evidence type="ECO:0000305" key="2"/>
<comment type="similarity">
    <text evidence="1">Belongs to the eukaryotic ribosomal protein eS17 family.</text>
</comment>
<dbReference type="EMBL" id="CP000742">
    <property type="protein sequence ID" value="ABR55344.1"/>
    <property type="molecule type" value="Genomic_DNA"/>
</dbReference>
<dbReference type="RefSeq" id="WP_012066258.1">
    <property type="nucleotide sequence ID" value="NC_009634.1"/>
</dbReference>
<dbReference type="SMR" id="A6US72"/>
<dbReference type="STRING" id="406327.Mevan_1450"/>
<dbReference type="GeneID" id="5324837"/>
<dbReference type="KEGG" id="mvn:Mevan_1450"/>
<dbReference type="eggNOG" id="arCOG01885">
    <property type="taxonomic scope" value="Archaea"/>
</dbReference>
<dbReference type="HOGENOM" id="CLU_176720_0_1_2"/>
<dbReference type="OrthoDB" id="52479at2157"/>
<dbReference type="Proteomes" id="UP000001107">
    <property type="component" value="Chromosome"/>
</dbReference>
<dbReference type="GO" id="GO:0005829">
    <property type="term" value="C:cytosol"/>
    <property type="evidence" value="ECO:0007669"/>
    <property type="project" value="UniProtKB-ARBA"/>
</dbReference>
<dbReference type="GO" id="GO:1990904">
    <property type="term" value="C:ribonucleoprotein complex"/>
    <property type="evidence" value="ECO:0007669"/>
    <property type="project" value="UniProtKB-KW"/>
</dbReference>
<dbReference type="GO" id="GO:0005840">
    <property type="term" value="C:ribosome"/>
    <property type="evidence" value="ECO:0007669"/>
    <property type="project" value="UniProtKB-KW"/>
</dbReference>
<dbReference type="GO" id="GO:0003735">
    <property type="term" value="F:structural constituent of ribosome"/>
    <property type="evidence" value="ECO:0007669"/>
    <property type="project" value="InterPro"/>
</dbReference>
<dbReference type="GO" id="GO:0006412">
    <property type="term" value="P:translation"/>
    <property type="evidence" value="ECO:0007669"/>
    <property type="project" value="UniProtKB-UniRule"/>
</dbReference>
<dbReference type="Gene3D" id="1.10.60.20">
    <property type="entry name" value="Ribosomal protein S17e-like"/>
    <property type="match status" value="1"/>
</dbReference>
<dbReference type="HAMAP" id="MF_00511">
    <property type="entry name" value="Ribosomal_eS17"/>
    <property type="match status" value="1"/>
</dbReference>
<dbReference type="InterPro" id="IPR001210">
    <property type="entry name" value="Ribosomal_eS17"/>
</dbReference>
<dbReference type="InterPro" id="IPR018273">
    <property type="entry name" value="Ribosomal_eS17_CS"/>
</dbReference>
<dbReference type="InterPro" id="IPR036401">
    <property type="entry name" value="Ribosomal_eS17_sf"/>
</dbReference>
<dbReference type="NCBIfam" id="NF002242">
    <property type="entry name" value="PRK01151.1"/>
    <property type="match status" value="1"/>
</dbReference>
<dbReference type="PANTHER" id="PTHR10732">
    <property type="entry name" value="40S RIBOSOMAL PROTEIN S17"/>
    <property type="match status" value="1"/>
</dbReference>
<dbReference type="PANTHER" id="PTHR10732:SF0">
    <property type="entry name" value="40S RIBOSOMAL PROTEIN S17"/>
    <property type="match status" value="1"/>
</dbReference>
<dbReference type="Pfam" id="PF00833">
    <property type="entry name" value="Ribosomal_S17e"/>
    <property type="match status" value="1"/>
</dbReference>
<dbReference type="SUPFAM" id="SSF116820">
    <property type="entry name" value="Rps17e-like"/>
    <property type="match status" value="1"/>
</dbReference>
<dbReference type="PROSITE" id="PS00712">
    <property type="entry name" value="RIBOSOMAL_S17E"/>
    <property type="match status" value="1"/>
</dbReference>
<organism>
    <name type="scientific">Methanococcus vannielii (strain ATCC 35089 / DSM 1224 / JCM 13029 / OCM 148 / SB)</name>
    <dbReference type="NCBI Taxonomy" id="406327"/>
    <lineage>
        <taxon>Archaea</taxon>
        <taxon>Methanobacteriati</taxon>
        <taxon>Methanobacteriota</taxon>
        <taxon>Methanomada group</taxon>
        <taxon>Methanococci</taxon>
        <taxon>Methanococcales</taxon>
        <taxon>Methanococcaceae</taxon>
        <taxon>Methanococcus</taxon>
    </lineage>
</organism>
<feature type="chain" id="PRO_1000050628" description="Small ribosomal subunit protein eS17">
    <location>
        <begin position="1"/>
        <end position="63"/>
    </location>
</feature>
<name>RS17E_METVS</name>
<gene>
    <name evidence="1" type="primary">rps17e</name>
    <name type="ordered locus">Mevan_1450</name>
</gene>
<protein>
    <recommendedName>
        <fullName evidence="1">Small ribosomal subunit protein eS17</fullName>
    </recommendedName>
    <alternativeName>
        <fullName evidence="2">30S ribosomal protein S17e</fullName>
    </alternativeName>
</protein>